<accession>B7M942</accession>
<feature type="chain" id="PRO_1000201246" description="UPF0502 protein YceH">
    <location>
        <begin position="1"/>
        <end position="215"/>
    </location>
</feature>
<feature type="modified residue" description="N6-acetyllysine" evidence="1">
    <location>
        <position position="80"/>
    </location>
</feature>
<sequence length="215" mass="24150">MKYQLTALEARVIGCLLEKQVTTPEQYPLSVNGVVTACNQKTNREPVMNLSESEVQEQLDNLVKRHYLRTVSGFGNRVTKYEQRFCNSEFGDLKLSAAEVALITTLLLRGAQTPGELRSRAARMYEFSDMAEVESTLEQLANREDGPFVVRLAREPGKRESRYMHLFSGEVEDQPAVTDMSNAVDGDLQARVEALEIEVAELKQRLDSLLAHLGD</sequence>
<proteinExistence type="inferred from homology"/>
<keyword id="KW-0007">Acetylation</keyword>
<dbReference type="EMBL" id="CU928160">
    <property type="protein sequence ID" value="CAQ97966.1"/>
    <property type="molecule type" value="Genomic_DNA"/>
</dbReference>
<dbReference type="RefSeq" id="WP_000877116.1">
    <property type="nucleotide sequence ID" value="NC_011741.1"/>
</dbReference>
<dbReference type="SMR" id="B7M942"/>
<dbReference type="KEGG" id="ecr:ECIAI1_1102"/>
<dbReference type="HOGENOM" id="CLU_057831_2_0_6"/>
<dbReference type="FunFam" id="1.10.10.10:FF:000196">
    <property type="entry name" value="UPF0502 protein YceH"/>
    <property type="match status" value="1"/>
</dbReference>
<dbReference type="FunFam" id="1.10.10.10:FF:000241">
    <property type="entry name" value="UPF0502 protein YceH"/>
    <property type="match status" value="1"/>
</dbReference>
<dbReference type="Gene3D" id="1.10.10.10">
    <property type="entry name" value="Winged helix-like DNA-binding domain superfamily/Winged helix DNA-binding domain"/>
    <property type="match status" value="2"/>
</dbReference>
<dbReference type="HAMAP" id="MF_01584">
    <property type="entry name" value="UPF0502"/>
    <property type="match status" value="1"/>
</dbReference>
<dbReference type="InterPro" id="IPR007432">
    <property type="entry name" value="DUF480"/>
</dbReference>
<dbReference type="InterPro" id="IPR036388">
    <property type="entry name" value="WH-like_DNA-bd_sf"/>
</dbReference>
<dbReference type="InterPro" id="IPR036390">
    <property type="entry name" value="WH_DNA-bd_sf"/>
</dbReference>
<dbReference type="NCBIfam" id="NF008413">
    <property type="entry name" value="PRK11239.1"/>
    <property type="match status" value="1"/>
</dbReference>
<dbReference type="PANTHER" id="PTHR38768">
    <property type="entry name" value="UPF0502 PROTEIN YCEH"/>
    <property type="match status" value="1"/>
</dbReference>
<dbReference type="PANTHER" id="PTHR38768:SF1">
    <property type="entry name" value="UPF0502 PROTEIN YCEH"/>
    <property type="match status" value="1"/>
</dbReference>
<dbReference type="Pfam" id="PF04337">
    <property type="entry name" value="DUF480"/>
    <property type="match status" value="1"/>
</dbReference>
<dbReference type="SUPFAM" id="SSF46785">
    <property type="entry name" value="Winged helix' DNA-binding domain"/>
    <property type="match status" value="2"/>
</dbReference>
<protein>
    <recommendedName>
        <fullName evidence="1">UPF0502 protein YceH</fullName>
    </recommendedName>
</protein>
<name>YCEH_ECO8A</name>
<reference key="1">
    <citation type="journal article" date="2009" name="PLoS Genet.">
        <title>Organised genome dynamics in the Escherichia coli species results in highly diverse adaptive paths.</title>
        <authorList>
            <person name="Touchon M."/>
            <person name="Hoede C."/>
            <person name="Tenaillon O."/>
            <person name="Barbe V."/>
            <person name="Baeriswyl S."/>
            <person name="Bidet P."/>
            <person name="Bingen E."/>
            <person name="Bonacorsi S."/>
            <person name="Bouchier C."/>
            <person name="Bouvet O."/>
            <person name="Calteau A."/>
            <person name="Chiapello H."/>
            <person name="Clermont O."/>
            <person name="Cruveiller S."/>
            <person name="Danchin A."/>
            <person name="Diard M."/>
            <person name="Dossat C."/>
            <person name="Karoui M.E."/>
            <person name="Frapy E."/>
            <person name="Garry L."/>
            <person name="Ghigo J.M."/>
            <person name="Gilles A.M."/>
            <person name="Johnson J."/>
            <person name="Le Bouguenec C."/>
            <person name="Lescat M."/>
            <person name="Mangenot S."/>
            <person name="Martinez-Jehanne V."/>
            <person name="Matic I."/>
            <person name="Nassif X."/>
            <person name="Oztas S."/>
            <person name="Petit M.A."/>
            <person name="Pichon C."/>
            <person name="Rouy Z."/>
            <person name="Ruf C.S."/>
            <person name="Schneider D."/>
            <person name="Tourret J."/>
            <person name="Vacherie B."/>
            <person name="Vallenet D."/>
            <person name="Medigue C."/>
            <person name="Rocha E.P.C."/>
            <person name="Denamur E."/>
        </authorList>
    </citation>
    <scope>NUCLEOTIDE SEQUENCE [LARGE SCALE GENOMIC DNA]</scope>
    <source>
        <strain>IAI1</strain>
    </source>
</reference>
<organism>
    <name type="scientific">Escherichia coli O8 (strain IAI1)</name>
    <dbReference type="NCBI Taxonomy" id="585034"/>
    <lineage>
        <taxon>Bacteria</taxon>
        <taxon>Pseudomonadati</taxon>
        <taxon>Pseudomonadota</taxon>
        <taxon>Gammaproteobacteria</taxon>
        <taxon>Enterobacterales</taxon>
        <taxon>Enterobacteriaceae</taxon>
        <taxon>Escherichia</taxon>
    </lineage>
</organism>
<comment type="similarity">
    <text evidence="1">Belongs to the UPF0502 family.</text>
</comment>
<gene>
    <name evidence="1" type="primary">yceH</name>
    <name type="ordered locus">ECIAI1_1102</name>
</gene>
<evidence type="ECO:0000255" key="1">
    <source>
        <dbReference type="HAMAP-Rule" id="MF_01584"/>
    </source>
</evidence>